<gene>
    <name evidence="1" type="primary">rplT</name>
    <name type="ordered locus">BLA_0736</name>
</gene>
<evidence type="ECO:0000255" key="1">
    <source>
        <dbReference type="HAMAP-Rule" id="MF_00382"/>
    </source>
</evidence>
<evidence type="ECO:0000305" key="2"/>
<dbReference type="EMBL" id="CP001213">
    <property type="protein sequence ID" value="ACL29029.1"/>
    <property type="molecule type" value="Genomic_DNA"/>
</dbReference>
<dbReference type="RefSeq" id="WP_004218699.1">
    <property type="nucleotide sequence ID" value="NC_011835.1"/>
</dbReference>
<dbReference type="SMR" id="B8DSQ0"/>
<dbReference type="STRING" id="442563.BLA_0736"/>
<dbReference type="GeneID" id="29695603"/>
<dbReference type="KEGG" id="bla:BLA_0736"/>
<dbReference type="HOGENOM" id="CLU_123265_0_0_11"/>
<dbReference type="Proteomes" id="UP000002456">
    <property type="component" value="Chromosome"/>
</dbReference>
<dbReference type="GO" id="GO:1990904">
    <property type="term" value="C:ribonucleoprotein complex"/>
    <property type="evidence" value="ECO:0007669"/>
    <property type="project" value="UniProtKB-KW"/>
</dbReference>
<dbReference type="GO" id="GO:0005840">
    <property type="term" value="C:ribosome"/>
    <property type="evidence" value="ECO:0007669"/>
    <property type="project" value="UniProtKB-KW"/>
</dbReference>
<dbReference type="GO" id="GO:0019843">
    <property type="term" value="F:rRNA binding"/>
    <property type="evidence" value="ECO:0007669"/>
    <property type="project" value="UniProtKB-UniRule"/>
</dbReference>
<dbReference type="GO" id="GO:0003735">
    <property type="term" value="F:structural constituent of ribosome"/>
    <property type="evidence" value="ECO:0007669"/>
    <property type="project" value="InterPro"/>
</dbReference>
<dbReference type="GO" id="GO:0000027">
    <property type="term" value="P:ribosomal large subunit assembly"/>
    <property type="evidence" value="ECO:0007669"/>
    <property type="project" value="UniProtKB-UniRule"/>
</dbReference>
<dbReference type="GO" id="GO:0006412">
    <property type="term" value="P:translation"/>
    <property type="evidence" value="ECO:0007669"/>
    <property type="project" value="InterPro"/>
</dbReference>
<dbReference type="CDD" id="cd07026">
    <property type="entry name" value="Ribosomal_L20"/>
    <property type="match status" value="1"/>
</dbReference>
<dbReference type="FunFam" id="1.10.1900.20:FF:000001">
    <property type="entry name" value="50S ribosomal protein L20"/>
    <property type="match status" value="1"/>
</dbReference>
<dbReference type="Gene3D" id="6.10.160.10">
    <property type="match status" value="1"/>
</dbReference>
<dbReference type="Gene3D" id="1.10.1900.20">
    <property type="entry name" value="Ribosomal protein L20"/>
    <property type="match status" value="1"/>
</dbReference>
<dbReference type="HAMAP" id="MF_00382">
    <property type="entry name" value="Ribosomal_bL20"/>
    <property type="match status" value="1"/>
</dbReference>
<dbReference type="InterPro" id="IPR005813">
    <property type="entry name" value="Ribosomal_bL20"/>
</dbReference>
<dbReference type="InterPro" id="IPR049946">
    <property type="entry name" value="RIBOSOMAL_L20_CS"/>
</dbReference>
<dbReference type="InterPro" id="IPR035566">
    <property type="entry name" value="Ribosomal_protein_bL20_C"/>
</dbReference>
<dbReference type="NCBIfam" id="TIGR01032">
    <property type="entry name" value="rplT_bact"/>
    <property type="match status" value="1"/>
</dbReference>
<dbReference type="PANTHER" id="PTHR10986">
    <property type="entry name" value="39S RIBOSOMAL PROTEIN L20"/>
    <property type="match status" value="1"/>
</dbReference>
<dbReference type="Pfam" id="PF00453">
    <property type="entry name" value="Ribosomal_L20"/>
    <property type="match status" value="1"/>
</dbReference>
<dbReference type="PRINTS" id="PR00062">
    <property type="entry name" value="RIBOSOMALL20"/>
</dbReference>
<dbReference type="SUPFAM" id="SSF74731">
    <property type="entry name" value="Ribosomal protein L20"/>
    <property type="match status" value="1"/>
</dbReference>
<dbReference type="PROSITE" id="PS00937">
    <property type="entry name" value="RIBOSOMAL_L20"/>
    <property type="match status" value="1"/>
</dbReference>
<accession>B8DSQ0</accession>
<comment type="function">
    <text evidence="1">Binds directly to 23S ribosomal RNA and is necessary for the in vitro assembly process of the 50S ribosomal subunit. It is not involved in the protein synthesizing functions of that subunit.</text>
</comment>
<comment type="similarity">
    <text evidence="1">Belongs to the bacterial ribosomal protein bL20 family.</text>
</comment>
<keyword id="KW-1185">Reference proteome</keyword>
<keyword id="KW-0687">Ribonucleoprotein</keyword>
<keyword id="KW-0689">Ribosomal protein</keyword>
<keyword id="KW-0694">RNA-binding</keyword>
<keyword id="KW-0699">rRNA-binding</keyword>
<reference key="1">
    <citation type="journal article" date="2009" name="J. Bacteriol.">
        <title>Genome sequence of the probiotic bacterium Bifidobacterium animalis subsp. lactis AD011.</title>
        <authorList>
            <person name="Kim J.F."/>
            <person name="Jeong H."/>
            <person name="Yu D.S."/>
            <person name="Choi S.-H."/>
            <person name="Hur C.-G."/>
            <person name="Park M.-S."/>
            <person name="Yoon S.H."/>
            <person name="Kim D.-W."/>
            <person name="Ji G.E."/>
            <person name="Park H.-S."/>
            <person name="Oh T.K."/>
        </authorList>
    </citation>
    <scope>NUCLEOTIDE SEQUENCE [LARGE SCALE GENOMIC DNA]</scope>
    <source>
        <strain>AD011</strain>
    </source>
</reference>
<feature type="chain" id="PRO_1000193938" description="Large ribosomal subunit protein bL20">
    <location>
        <begin position="1"/>
        <end position="127"/>
    </location>
</feature>
<organism>
    <name type="scientific">Bifidobacterium animalis subsp. lactis (strain AD011)</name>
    <dbReference type="NCBI Taxonomy" id="442563"/>
    <lineage>
        <taxon>Bacteria</taxon>
        <taxon>Bacillati</taxon>
        <taxon>Actinomycetota</taxon>
        <taxon>Actinomycetes</taxon>
        <taxon>Bifidobacteriales</taxon>
        <taxon>Bifidobacteriaceae</taxon>
        <taxon>Bifidobacterium</taxon>
    </lineage>
</organism>
<proteinExistence type="inferred from homology"/>
<name>RL20_BIFA0</name>
<sequence>MARVKRAVNAHKKRRTVLERAKGYRGQRSRLYRKAKEQLLHSFNYNYRDRKARKGDFRKLWIQRINIAVRNEGITYNRFIQGLRLAGIELDRRALAELAVNDPDTFKTIVEQAKAALPEDVNAPVNA</sequence>
<protein>
    <recommendedName>
        <fullName evidence="1">Large ribosomal subunit protein bL20</fullName>
    </recommendedName>
    <alternativeName>
        <fullName evidence="2">50S ribosomal protein L20</fullName>
    </alternativeName>
</protein>